<proteinExistence type="inferred from homology"/>
<feature type="signal peptide" evidence="1">
    <location>
        <begin position="1"/>
        <end position="34"/>
    </location>
</feature>
<feature type="chain" id="PRO_5000110064" description="LPS-assembly protein LptD">
    <location>
        <begin position="35"/>
        <end position="799"/>
    </location>
</feature>
<comment type="function">
    <text evidence="1">Together with LptE, is involved in the assembly of lipopolysaccharide (LPS) at the surface of the outer membrane.</text>
</comment>
<comment type="subunit">
    <text evidence="1">Component of the lipopolysaccharide transport and assembly complex. Interacts with LptE and LptA.</text>
</comment>
<comment type="subcellular location">
    <subcellularLocation>
        <location evidence="1">Cell outer membrane</location>
    </subcellularLocation>
</comment>
<comment type="similarity">
    <text evidence="1">Belongs to the LptD family.</text>
</comment>
<reference key="1">
    <citation type="submission" date="2006-02" db="EMBL/GenBank/DDBJ databases">
        <title>Complete sequence of chromosome of Rhodoferax ferrireducens DSM 15236.</title>
        <authorList>
            <person name="Copeland A."/>
            <person name="Lucas S."/>
            <person name="Lapidus A."/>
            <person name="Barry K."/>
            <person name="Detter J.C."/>
            <person name="Glavina del Rio T."/>
            <person name="Hammon N."/>
            <person name="Israni S."/>
            <person name="Pitluck S."/>
            <person name="Brettin T."/>
            <person name="Bruce D."/>
            <person name="Han C."/>
            <person name="Tapia R."/>
            <person name="Gilna P."/>
            <person name="Kiss H."/>
            <person name="Schmutz J."/>
            <person name="Larimer F."/>
            <person name="Land M."/>
            <person name="Kyrpides N."/>
            <person name="Ivanova N."/>
            <person name="Richardson P."/>
        </authorList>
    </citation>
    <scope>NUCLEOTIDE SEQUENCE [LARGE SCALE GENOMIC DNA]</scope>
    <source>
        <strain>ATCC BAA-621 / DSM 15236 / T118</strain>
    </source>
</reference>
<dbReference type="EMBL" id="CP000267">
    <property type="protein sequence ID" value="ABD67859.1"/>
    <property type="molecule type" value="Genomic_DNA"/>
</dbReference>
<dbReference type="SMR" id="Q223E4"/>
<dbReference type="STRING" id="338969.Rfer_0098"/>
<dbReference type="KEGG" id="rfr:Rfer_0098"/>
<dbReference type="eggNOG" id="COG1452">
    <property type="taxonomic scope" value="Bacteria"/>
</dbReference>
<dbReference type="HOGENOM" id="CLU_009039_0_0_4"/>
<dbReference type="OrthoDB" id="9760225at2"/>
<dbReference type="Proteomes" id="UP000008332">
    <property type="component" value="Chromosome"/>
</dbReference>
<dbReference type="GO" id="GO:0009279">
    <property type="term" value="C:cell outer membrane"/>
    <property type="evidence" value="ECO:0007669"/>
    <property type="project" value="UniProtKB-SubCell"/>
</dbReference>
<dbReference type="GO" id="GO:1990351">
    <property type="term" value="C:transporter complex"/>
    <property type="evidence" value="ECO:0007669"/>
    <property type="project" value="TreeGrafter"/>
</dbReference>
<dbReference type="GO" id="GO:0043165">
    <property type="term" value="P:Gram-negative-bacterium-type cell outer membrane assembly"/>
    <property type="evidence" value="ECO:0007669"/>
    <property type="project" value="UniProtKB-UniRule"/>
</dbReference>
<dbReference type="GO" id="GO:0015920">
    <property type="term" value="P:lipopolysaccharide transport"/>
    <property type="evidence" value="ECO:0007669"/>
    <property type="project" value="InterPro"/>
</dbReference>
<dbReference type="HAMAP" id="MF_01411">
    <property type="entry name" value="LPS_assembly_LptD"/>
    <property type="match status" value="1"/>
</dbReference>
<dbReference type="InterPro" id="IPR020889">
    <property type="entry name" value="LipoPS_assembly_LptD"/>
</dbReference>
<dbReference type="InterPro" id="IPR050218">
    <property type="entry name" value="LptD"/>
</dbReference>
<dbReference type="InterPro" id="IPR007543">
    <property type="entry name" value="LptD_C"/>
</dbReference>
<dbReference type="PANTHER" id="PTHR30189">
    <property type="entry name" value="LPS-ASSEMBLY PROTEIN"/>
    <property type="match status" value="1"/>
</dbReference>
<dbReference type="PANTHER" id="PTHR30189:SF1">
    <property type="entry name" value="LPS-ASSEMBLY PROTEIN LPTD"/>
    <property type="match status" value="1"/>
</dbReference>
<dbReference type="Pfam" id="PF04453">
    <property type="entry name" value="LptD"/>
    <property type="match status" value="1"/>
</dbReference>
<organism>
    <name type="scientific">Albidiferax ferrireducens (strain ATCC BAA-621 / DSM 15236 / T118)</name>
    <name type="common">Rhodoferax ferrireducens</name>
    <dbReference type="NCBI Taxonomy" id="338969"/>
    <lineage>
        <taxon>Bacteria</taxon>
        <taxon>Pseudomonadati</taxon>
        <taxon>Pseudomonadota</taxon>
        <taxon>Betaproteobacteria</taxon>
        <taxon>Burkholderiales</taxon>
        <taxon>Comamonadaceae</taxon>
        <taxon>Rhodoferax</taxon>
    </lineage>
</organism>
<gene>
    <name evidence="1" type="primary">lptD</name>
    <name type="synonym">imp</name>
    <name type="synonym">ostA</name>
    <name type="ordered locus">Rfer_0098</name>
</gene>
<keyword id="KW-0998">Cell outer membrane</keyword>
<keyword id="KW-0472">Membrane</keyword>
<keyword id="KW-1185">Reference proteome</keyword>
<keyword id="KW-0732">Signal</keyword>
<name>LPTD_ALBFT</name>
<evidence type="ECO:0000255" key="1">
    <source>
        <dbReference type="HAMAP-Rule" id="MF_01411"/>
    </source>
</evidence>
<protein>
    <recommendedName>
        <fullName evidence="1">LPS-assembly protein LptD</fullName>
    </recommendedName>
</protein>
<sequence>MMHELDLRPHLARFAQRPLALLAWALLQGTSVNAQVAQVAPDEPPLPLKTSPLLQEQVAPALRSSLPTFISAEHIFGRPDLETVLEGRAELRRGDLVIKADRLEYDQPSDLATASGNVLINRAGNVYEGPLLELKLDTFEGFFNQPRYYFLKNDAHGQADRVDFIDDQRAVIHNATFTTCRRLPGPSWLPDWILRAASISLDNEEDVGTAKGALLSFKGVPLLPIPYLSFPLSDKRKSGVLPPILGLDNVNGAEVSVPYYWNIAPNRDATFTPTLMSKRGVNLSSELRYLEADYAGQVQLDLMPSDQLRDSTRWGLTYTHQATLQNSWTRPFTAGGVALNLNLNRVSDDNYWRDFTRASTGSLTQRLLTNDASLSWTEGNFSNTVRTLKWQTLQDVSAPITPPYDRLPQLATRYARSNVGGFDYSVDADYTRFQSERSLTLQPNAQRVFSVLQLSRPWVTAAGFITPKLQLNVSNYQFDTPLSNGARAASRVVPTLSVDSGLVFERDARYFGMNFRQTLEPRAFYVNTPFRDQRLLPNYDSGAVDFNFATIYTDNAFVGNDRISDSDLLTLGVSTRLLDPATGAQVARFGVAQRLRFRDQNVTLLPTDAPVTDRISDLLLGAAVNWDPKWAFDSTVQFNPTTKQSVRSTIGARYSAGHYRTVSAAYRYQRESSEQLDIGWQWPINDLWGERGQELGAGRGQGEGRWYSVGRLNYSMQERKLVDAVLGFEYDAGCWLGRIVLEQLQTSTASANQRIMFQLEFVGLTRLGVNPLKSLKDNIPGYQYLREQTSPPSRFSNYD</sequence>
<accession>Q223E4</accession>